<accession>Q9V0E1</accession>
<accession>G8ZH59</accession>
<name>PANB_PYRAB</name>
<comment type="function">
    <text evidence="1">Catalyzes the reversible reaction in which hydroxymethyl group from 5,10-methylenetetrahydrofolate is transferred onto alpha-ketoisovalerate to form ketopantoate.</text>
</comment>
<comment type="catalytic activity">
    <reaction evidence="1">
        <text>3-methyl-2-oxobutanoate + (6R)-5,10-methylene-5,6,7,8-tetrahydrofolate + H2O = 2-dehydropantoate + (6S)-5,6,7,8-tetrahydrofolate</text>
        <dbReference type="Rhea" id="RHEA:11824"/>
        <dbReference type="ChEBI" id="CHEBI:11561"/>
        <dbReference type="ChEBI" id="CHEBI:11851"/>
        <dbReference type="ChEBI" id="CHEBI:15377"/>
        <dbReference type="ChEBI" id="CHEBI:15636"/>
        <dbReference type="ChEBI" id="CHEBI:57453"/>
        <dbReference type="EC" id="2.1.2.11"/>
    </reaction>
</comment>
<comment type="cofactor">
    <cofactor evidence="1">
        <name>Mg(2+)</name>
        <dbReference type="ChEBI" id="CHEBI:18420"/>
    </cofactor>
    <text evidence="1">Binds 1 Mg(2+) ion per subunit.</text>
</comment>
<comment type="pathway">
    <text evidence="1">Cofactor biosynthesis; coenzyme A biosynthesis.</text>
</comment>
<comment type="subunit">
    <text evidence="1">Homodecamer; pentamer of dimers.</text>
</comment>
<comment type="subcellular location">
    <subcellularLocation>
        <location evidence="1">Cytoplasm</location>
    </subcellularLocation>
</comment>
<comment type="similarity">
    <text evidence="1">Belongs to the PanB family.</text>
</comment>
<feature type="chain" id="PRO_0000184917" description="3-methyl-2-oxobutanoate hydroxymethyltransferase">
    <location>
        <begin position="1"/>
        <end position="282"/>
    </location>
</feature>
<feature type="active site" description="Proton acceptor" evidence="1">
    <location>
        <position position="181"/>
    </location>
</feature>
<feature type="binding site" evidence="1">
    <location>
        <begin position="44"/>
        <end position="45"/>
    </location>
    <ligand>
        <name>3-methyl-2-oxobutanoate</name>
        <dbReference type="ChEBI" id="CHEBI:11851"/>
    </ligand>
</feature>
<feature type="binding site" evidence="1">
    <location>
        <position position="44"/>
    </location>
    <ligand>
        <name>Mg(2+)</name>
        <dbReference type="ChEBI" id="CHEBI:18420"/>
    </ligand>
</feature>
<feature type="binding site" evidence="1">
    <location>
        <position position="83"/>
    </location>
    <ligand>
        <name>3-methyl-2-oxobutanoate</name>
        <dbReference type="ChEBI" id="CHEBI:11851"/>
    </ligand>
</feature>
<feature type="binding site" evidence="1">
    <location>
        <position position="83"/>
    </location>
    <ligand>
        <name>Mg(2+)</name>
        <dbReference type="ChEBI" id="CHEBI:18420"/>
    </ligand>
</feature>
<feature type="binding site" evidence="1">
    <location>
        <position position="112"/>
    </location>
    <ligand>
        <name>3-methyl-2-oxobutanoate</name>
        <dbReference type="ChEBI" id="CHEBI:11851"/>
    </ligand>
</feature>
<feature type="binding site" evidence="1">
    <location>
        <position position="114"/>
    </location>
    <ligand>
        <name>Mg(2+)</name>
        <dbReference type="ChEBI" id="CHEBI:18420"/>
    </ligand>
</feature>
<protein>
    <recommendedName>
        <fullName evidence="1">3-methyl-2-oxobutanoate hydroxymethyltransferase</fullName>
        <ecNumber evidence="1">2.1.2.11</ecNumber>
    </recommendedName>
    <alternativeName>
        <fullName evidence="1">Ketopantoate hydroxymethyltransferase</fullName>
        <shortName evidence="1">KPHMT</shortName>
    </alternativeName>
</protein>
<evidence type="ECO:0000255" key="1">
    <source>
        <dbReference type="HAMAP-Rule" id="MF_00156"/>
    </source>
</evidence>
<sequence>MREITPRKIIEMKGKEKIAMITAYDYPSALLADKAGFDIVFVGDSLGMVVYGEPNTLNVSMEQMVFHTRAVARAVKRALVLADMPFGSYEVSVEEGIKNAIKLIQAGADAVKIEGGYDHKKLVKRLVRMGIPVMGHTGLTPQRYLRLGGYRIMGSTEEEVEEIIRDAKALEKAGAFAVVLEFVLADVAKLVTEEVSIPTIGIGSGPYVDGQVLVWHDVLGLYEESPPFVKRYANLRDEILGAISEFKKDVKEGKFPGREHYWEFQDKEEFKRIKESVLRKVD</sequence>
<organism>
    <name type="scientific">Pyrococcus abyssi (strain GE5 / Orsay)</name>
    <dbReference type="NCBI Taxonomy" id="272844"/>
    <lineage>
        <taxon>Archaea</taxon>
        <taxon>Methanobacteriati</taxon>
        <taxon>Methanobacteriota</taxon>
        <taxon>Thermococci</taxon>
        <taxon>Thermococcales</taxon>
        <taxon>Thermococcaceae</taxon>
        <taxon>Pyrococcus</taxon>
    </lineage>
</organism>
<proteinExistence type="inferred from homology"/>
<gene>
    <name evidence="1" type="primary">panB</name>
    <name type="ordered locus">PYRAB08490</name>
    <name type="ORF">PAB0570</name>
</gene>
<dbReference type="EC" id="2.1.2.11" evidence="1"/>
<dbReference type="EMBL" id="AJ248285">
    <property type="protein sequence ID" value="CAB49763.1"/>
    <property type="molecule type" value="Genomic_DNA"/>
</dbReference>
<dbReference type="EMBL" id="HE613800">
    <property type="protein sequence ID" value="CCE70254.1"/>
    <property type="molecule type" value="Genomic_DNA"/>
</dbReference>
<dbReference type="PIR" id="B75131">
    <property type="entry name" value="B75131"/>
</dbReference>
<dbReference type="RefSeq" id="WP_010867972.1">
    <property type="nucleotide sequence ID" value="NC_000868.1"/>
</dbReference>
<dbReference type="SMR" id="Q9V0E1"/>
<dbReference type="STRING" id="272844.PAB0570"/>
<dbReference type="KEGG" id="pab:PAB0570"/>
<dbReference type="PATRIC" id="fig|272844.11.peg.898"/>
<dbReference type="eggNOG" id="arCOG00584">
    <property type="taxonomic scope" value="Archaea"/>
</dbReference>
<dbReference type="HOGENOM" id="CLU_036645_1_0_2"/>
<dbReference type="OrthoDB" id="8414at2157"/>
<dbReference type="PhylomeDB" id="Q9V0E1"/>
<dbReference type="UniPathway" id="UPA00241"/>
<dbReference type="Proteomes" id="UP000000810">
    <property type="component" value="Chromosome"/>
</dbReference>
<dbReference type="Proteomes" id="UP000009139">
    <property type="component" value="Chromosome"/>
</dbReference>
<dbReference type="GO" id="GO:0005737">
    <property type="term" value="C:cytoplasm"/>
    <property type="evidence" value="ECO:0007669"/>
    <property type="project" value="UniProtKB-SubCell"/>
</dbReference>
<dbReference type="GO" id="GO:0003864">
    <property type="term" value="F:3-methyl-2-oxobutanoate hydroxymethyltransferase activity"/>
    <property type="evidence" value="ECO:0007669"/>
    <property type="project" value="UniProtKB-UniRule"/>
</dbReference>
<dbReference type="GO" id="GO:0000287">
    <property type="term" value="F:magnesium ion binding"/>
    <property type="evidence" value="ECO:0007669"/>
    <property type="project" value="TreeGrafter"/>
</dbReference>
<dbReference type="GO" id="GO:0015937">
    <property type="term" value="P:coenzyme A biosynthetic process"/>
    <property type="evidence" value="ECO:0007669"/>
    <property type="project" value="UniProtKB-UniRule"/>
</dbReference>
<dbReference type="GO" id="GO:0015940">
    <property type="term" value="P:pantothenate biosynthetic process"/>
    <property type="evidence" value="ECO:0007669"/>
    <property type="project" value="InterPro"/>
</dbReference>
<dbReference type="CDD" id="cd06557">
    <property type="entry name" value="KPHMT-like"/>
    <property type="match status" value="1"/>
</dbReference>
<dbReference type="FunFam" id="3.20.20.60:FF:000003">
    <property type="entry name" value="3-methyl-2-oxobutanoate hydroxymethyltransferase"/>
    <property type="match status" value="1"/>
</dbReference>
<dbReference type="Gene3D" id="3.20.20.60">
    <property type="entry name" value="Phosphoenolpyruvate-binding domains"/>
    <property type="match status" value="1"/>
</dbReference>
<dbReference type="HAMAP" id="MF_00156">
    <property type="entry name" value="PanB"/>
    <property type="match status" value="1"/>
</dbReference>
<dbReference type="InterPro" id="IPR003700">
    <property type="entry name" value="Pantoate_hydroxy_MeTrfase"/>
</dbReference>
<dbReference type="InterPro" id="IPR015813">
    <property type="entry name" value="Pyrv/PenolPyrv_kinase-like_dom"/>
</dbReference>
<dbReference type="InterPro" id="IPR040442">
    <property type="entry name" value="Pyrv_kinase-like_dom_sf"/>
</dbReference>
<dbReference type="NCBIfam" id="TIGR00222">
    <property type="entry name" value="panB"/>
    <property type="match status" value="1"/>
</dbReference>
<dbReference type="NCBIfam" id="NF001452">
    <property type="entry name" value="PRK00311.1"/>
    <property type="match status" value="1"/>
</dbReference>
<dbReference type="PANTHER" id="PTHR20881">
    <property type="entry name" value="3-METHYL-2-OXOBUTANOATE HYDROXYMETHYLTRANSFERASE"/>
    <property type="match status" value="1"/>
</dbReference>
<dbReference type="PANTHER" id="PTHR20881:SF0">
    <property type="entry name" value="3-METHYL-2-OXOBUTANOATE HYDROXYMETHYLTRANSFERASE"/>
    <property type="match status" value="1"/>
</dbReference>
<dbReference type="Pfam" id="PF02548">
    <property type="entry name" value="Pantoate_transf"/>
    <property type="match status" value="1"/>
</dbReference>
<dbReference type="PIRSF" id="PIRSF000388">
    <property type="entry name" value="Pantoate_hydroxy_MeTrfase"/>
    <property type="match status" value="1"/>
</dbReference>
<dbReference type="SUPFAM" id="SSF51621">
    <property type="entry name" value="Phosphoenolpyruvate/pyruvate domain"/>
    <property type="match status" value="1"/>
</dbReference>
<reference key="1">
    <citation type="journal article" date="2003" name="Mol. Microbiol.">
        <title>An integrated analysis of the genome of the hyperthermophilic archaeon Pyrococcus abyssi.</title>
        <authorList>
            <person name="Cohen G.N."/>
            <person name="Barbe V."/>
            <person name="Flament D."/>
            <person name="Galperin M."/>
            <person name="Heilig R."/>
            <person name="Lecompte O."/>
            <person name="Poch O."/>
            <person name="Prieur D."/>
            <person name="Querellou J."/>
            <person name="Ripp R."/>
            <person name="Thierry J.-C."/>
            <person name="Van der Oost J."/>
            <person name="Weissenbach J."/>
            <person name="Zivanovic Y."/>
            <person name="Forterre P."/>
        </authorList>
    </citation>
    <scope>NUCLEOTIDE SEQUENCE [LARGE SCALE GENOMIC DNA]</scope>
    <source>
        <strain>GE5 / Orsay</strain>
    </source>
</reference>
<reference key="2">
    <citation type="journal article" date="2012" name="Curr. Microbiol.">
        <title>Re-annotation of two hyperthermophilic archaea Pyrococcus abyssi GE5 and Pyrococcus furiosus DSM 3638.</title>
        <authorList>
            <person name="Gao J."/>
            <person name="Wang J."/>
        </authorList>
    </citation>
    <scope>GENOME REANNOTATION</scope>
    <source>
        <strain>GE5 / Orsay</strain>
    </source>
</reference>
<keyword id="KW-0173">Coenzyme A biosynthesis</keyword>
<keyword id="KW-0963">Cytoplasm</keyword>
<keyword id="KW-0460">Magnesium</keyword>
<keyword id="KW-0479">Metal-binding</keyword>
<keyword id="KW-0808">Transferase</keyword>